<dbReference type="EC" id="2.7.11.33" evidence="1"/>
<dbReference type="EC" id="2.7.4.28" evidence="1"/>
<dbReference type="EMBL" id="CP001138">
    <property type="protein sequence ID" value="ACH50043.1"/>
    <property type="molecule type" value="Genomic_DNA"/>
</dbReference>
<dbReference type="RefSeq" id="WP_000370992.1">
    <property type="nucleotide sequence ID" value="NC_011149.1"/>
</dbReference>
<dbReference type="SMR" id="B5F7E7"/>
<dbReference type="KEGG" id="sea:SeAg_B1825"/>
<dbReference type="HOGENOM" id="CLU_046206_1_0_6"/>
<dbReference type="Proteomes" id="UP000008819">
    <property type="component" value="Chromosome"/>
</dbReference>
<dbReference type="GO" id="GO:0043531">
    <property type="term" value="F:ADP binding"/>
    <property type="evidence" value="ECO:0007669"/>
    <property type="project" value="UniProtKB-UniRule"/>
</dbReference>
<dbReference type="GO" id="GO:0005524">
    <property type="term" value="F:ATP binding"/>
    <property type="evidence" value="ECO:0007669"/>
    <property type="project" value="InterPro"/>
</dbReference>
<dbReference type="GO" id="GO:0016776">
    <property type="term" value="F:phosphotransferase activity, phosphate group as acceptor"/>
    <property type="evidence" value="ECO:0007669"/>
    <property type="project" value="UniProtKB-UniRule"/>
</dbReference>
<dbReference type="GO" id="GO:0004674">
    <property type="term" value="F:protein serine/threonine kinase activity"/>
    <property type="evidence" value="ECO:0007669"/>
    <property type="project" value="UniProtKB-UniRule"/>
</dbReference>
<dbReference type="HAMAP" id="MF_01062">
    <property type="entry name" value="PSRP"/>
    <property type="match status" value="1"/>
</dbReference>
<dbReference type="InterPro" id="IPR005177">
    <property type="entry name" value="Kinase-pyrophosphorylase"/>
</dbReference>
<dbReference type="InterPro" id="IPR026530">
    <property type="entry name" value="PSRP"/>
</dbReference>
<dbReference type="NCBIfam" id="NF003742">
    <property type="entry name" value="PRK05339.1"/>
    <property type="match status" value="1"/>
</dbReference>
<dbReference type="PANTHER" id="PTHR31756">
    <property type="entry name" value="PYRUVATE, PHOSPHATE DIKINASE REGULATORY PROTEIN 1, CHLOROPLASTIC"/>
    <property type="match status" value="1"/>
</dbReference>
<dbReference type="PANTHER" id="PTHR31756:SF3">
    <property type="entry name" value="PYRUVATE, PHOSPHATE DIKINASE REGULATORY PROTEIN 1, CHLOROPLASTIC"/>
    <property type="match status" value="1"/>
</dbReference>
<dbReference type="Pfam" id="PF03618">
    <property type="entry name" value="Kinase-PPPase"/>
    <property type="match status" value="1"/>
</dbReference>
<proteinExistence type="inferred from homology"/>
<protein>
    <recommendedName>
        <fullName evidence="1">Phosphoenolpyruvate synthase regulatory protein</fullName>
        <shortName evidence="1">PEP synthase regulatory protein</shortName>
        <shortName evidence="1">PSRP</shortName>
        <ecNumber evidence="1">2.7.11.33</ecNumber>
        <ecNumber evidence="1">2.7.4.28</ecNumber>
    </recommendedName>
    <alternativeName>
        <fullName evidence="1">Pyruvate, water dikinase regulatory protein</fullName>
    </alternativeName>
</protein>
<comment type="function">
    <text evidence="1">Bifunctional serine/threonine kinase and phosphorylase involved in the regulation of the phosphoenolpyruvate synthase (PEPS) by catalyzing its phosphorylation/dephosphorylation.</text>
</comment>
<comment type="catalytic activity">
    <reaction evidence="1">
        <text>[pyruvate, water dikinase] + ADP = [pyruvate, water dikinase]-phosphate + AMP + H(+)</text>
        <dbReference type="Rhea" id="RHEA:46020"/>
        <dbReference type="Rhea" id="RHEA-COMP:11425"/>
        <dbReference type="Rhea" id="RHEA-COMP:11426"/>
        <dbReference type="ChEBI" id="CHEBI:15378"/>
        <dbReference type="ChEBI" id="CHEBI:43176"/>
        <dbReference type="ChEBI" id="CHEBI:68546"/>
        <dbReference type="ChEBI" id="CHEBI:456215"/>
        <dbReference type="ChEBI" id="CHEBI:456216"/>
        <dbReference type="EC" id="2.7.11.33"/>
    </reaction>
</comment>
<comment type="catalytic activity">
    <reaction evidence="1">
        <text>[pyruvate, water dikinase]-phosphate + phosphate + H(+) = [pyruvate, water dikinase] + diphosphate</text>
        <dbReference type="Rhea" id="RHEA:48580"/>
        <dbReference type="Rhea" id="RHEA-COMP:11425"/>
        <dbReference type="Rhea" id="RHEA-COMP:11426"/>
        <dbReference type="ChEBI" id="CHEBI:15378"/>
        <dbReference type="ChEBI" id="CHEBI:33019"/>
        <dbReference type="ChEBI" id="CHEBI:43176"/>
        <dbReference type="ChEBI" id="CHEBI:43474"/>
        <dbReference type="ChEBI" id="CHEBI:68546"/>
        <dbReference type="EC" id="2.7.4.28"/>
    </reaction>
</comment>
<comment type="similarity">
    <text evidence="1">Belongs to the pyruvate, phosphate/water dikinase regulatory protein family. PSRP subfamily.</text>
</comment>
<keyword id="KW-0418">Kinase</keyword>
<keyword id="KW-0547">Nucleotide-binding</keyword>
<keyword id="KW-0723">Serine/threonine-protein kinase</keyword>
<keyword id="KW-0808">Transferase</keyword>
<evidence type="ECO:0000255" key="1">
    <source>
        <dbReference type="HAMAP-Rule" id="MF_01062"/>
    </source>
</evidence>
<accession>B5F7E7</accession>
<feature type="chain" id="PRO_1000136488" description="Phosphoenolpyruvate synthase regulatory protein">
    <location>
        <begin position="1"/>
        <end position="277"/>
    </location>
</feature>
<feature type="binding site" evidence="1">
    <location>
        <begin position="157"/>
        <end position="164"/>
    </location>
    <ligand>
        <name>ADP</name>
        <dbReference type="ChEBI" id="CHEBI:456216"/>
    </ligand>
</feature>
<organism>
    <name type="scientific">Salmonella agona (strain SL483)</name>
    <dbReference type="NCBI Taxonomy" id="454166"/>
    <lineage>
        <taxon>Bacteria</taxon>
        <taxon>Pseudomonadati</taxon>
        <taxon>Pseudomonadota</taxon>
        <taxon>Gammaproteobacteria</taxon>
        <taxon>Enterobacterales</taxon>
        <taxon>Enterobacteriaceae</taxon>
        <taxon>Salmonella</taxon>
    </lineage>
</organism>
<reference key="1">
    <citation type="journal article" date="2011" name="J. Bacteriol.">
        <title>Comparative genomics of 28 Salmonella enterica isolates: evidence for CRISPR-mediated adaptive sublineage evolution.</title>
        <authorList>
            <person name="Fricke W.F."/>
            <person name="Mammel M.K."/>
            <person name="McDermott P.F."/>
            <person name="Tartera C."/>
            <person name="White D.G."/>
            <person name="Leclerc J.E."/>
            <person name="Ravel J."/>
            <person name="Cebula T.A."/>
        </authorList>
    </citation>
    <scope>NUCLEOTIDE SEQUENCE [LARGE SCALE GENOMIC DNA]</scope>
    <source>
        <strain>SL483</strain>
    </source>
</reference>
<gene>
    <name evidence="1" type="primary">ppsR</name>
    <name type="ordered locus">SeAg_B1825</name>
</gene>
<sequence>MDNVVDRHVFYISDGTAITAEVLGHAVMSQFPVTISSITLPFVENESRARAVKDQIDAIYQQTGVRPLVFYSIVLPEIRAIILQSEGFCQDIVQALVAPLQQEMKLDPTPIAHRTHGLNPGNLNKYDARIAAIDYTLAHDDGISLRNLDQAQVILLGVSRCGKTPTSLYLAMQFGIRAANYPFIADDMDNLTLPTSLKPLQHKLFGLTIDPERLAAIREERRENSRYASLRQCRMEVAEVEALYRKNQIPCLNSTNYSVEEIATKILDIMGLNRRMY</sequence>
<name>PSRP_SALA4</name>